<proteinExistence type="evidence at protein level"/>
<evidence type="ECO:0000250" key="1">
    <source>
        <dbReference type="UniProtKB" id="C0HL47"/>
    </source>
</evidence>
<evidence type="ECO:0000269" key="2">
    <source>
    </source>
</evidence>
<evidence type="ECO:0000303" key="3">
    <source>
    </source>
</evidence>
<evidence type="ECO:0000305" key="4"/>
<evidence type="ECO:0000305" key="5">
    <source>
    </source>
</evidence>
<dbReference type="GO" id="GO:0005576">
    <property type="term" value="C:extracellular region"/>
    <property type="evidence" value="ECO:0007669"/>
    <property type="project" value="UniProtKB-SubCell"/>
</dbReference>
<dbReference type="GO" id="GO:0042742">
    <property type="term" value="P:defense response to bacterium"/>
    <property type="evidence" value="ECO:0007669"/>
    <property type="project" value="UniProtKB-KW"/>
</dbReference>
<dbReference type="GO" id="GO:0045087">
    <property type="term" value="P:innate immune response"/>
    <property type="evidence" value="ECO:0007669"/>
    <property type="project" value="UniProtKB-KW"/>
</dbReference>
<dbReference type="InterPro" id="IPR012520">
    <property type="entry name" value="Antimicrobial_frog_1"/>
</dbReference>
<dbReference type="Pfam" id="PF08018">
    <property type="entry name" value="Antimicrobial_1"/>
    <property type="match status" value="1"/>
</dbReference>
<accession>C0HLY2</accession>
<protein>
    <recommendedName>
        <fullName evidence="3">Brevinin-1LT</fullName>
    </recommendedName>
</protein>
<name>BR1_RANLT</name>
<reference evidence="4" key="1">
    <citation type="journal article" date="2016" name="Rapid Commun. Mass Spectrom.">
        <title>LTQ Orbitrap Velos in routine de novo sequencing of non-tryptic skin peptides from the frog Rana latastei with traditional and reliable manual spectra interpretation.</title>
        <authorList>
            <person name="Samgina T.Y."/>
            <person name="Tolpina M.D."/>
            <person name="Trebse P."/>
            <person name="Torkar G."/>
            <person name="Artemenko K.A."/>
            <person name="Bergquist J."/>
            <person name="Lebedev A.T."/>
        </authorList>
    </citation>
    <scope>PROTEIN SEQUENCE</scope>
    <scope>IDENTIFICATION BY MASS SPECTROMETRY</scope>
    <scope>SUBCELLULAR LOCATION</scope>
    <scope>TISSUE SPECIFICITY</scope>
    <scope>DISULFIDE BOND</scope>
</reference>
<organism>
    <name type="scientific">Rana latastei</name>
    <name type="common">Italian agile frog</name>
    <dbReference type="NCBI Taxonomy" id="151453"/>
    <lineage>
        <taxon>Eukaryota</taxon>
        <taxon>Metazoa</taxon>
        <taxon>Chordata</taxon>
        <taxon>Craniata</taxon>
        <taxon>Vertebrata</taxon>
        <taxon>Euteleostomi</taxon>
        <taxon>Amphibia</taxon>
        <taxon>Batrachia</taxon>
        <taxon>Anura</taxon>
        <taxon>Neobatrachia</taxon>
        <taxon>Ranoidea</taxon>
        <taxon>Ranidae</taxon>
        <taxon>Rana</taxon>
        <taxon>Rana</taxon>
    </lineage>
</organism>
<sequence>FFPIILGLVPKLVCLITKKC</sequence>
<comment type="function">
    <text evidence="1">Antimicrobial peptide.</text>
</comment>
<comment type="subcellular location">
    <subcellularLocation>
        <location evidence="2">Secreted</location>
    </subcellularLocation>
</comment>
<comment type="tissue specificity">
    <text evidence="5">Expressed by the skin glands.</text>
</comment>
<comment type="mass spectrometry"/>
<comment type="similarity">
    <text evidence="4">Belongs to the frog skin active peptide (FSAP) family. Brevinin subfamily.</text>
</comment>
<feature type="peptide" id="PRO_0000454222" description="Brevinin-1LT">
    <location>
        <begin position="1"/>
        <end position="20"/>
    </location>
</feature>
<feature type="disulfide bond" evidence="2">
    <location>
        <begin position="14"/>
        <end position="20"/>
    </location>
</feature>
<feature type="unsure residue" description="Assigned by comparison with orthologs" evidence="5">
    <location>
        <position position="4"/>
    </location>
</feature>
<feature type="unsure residue" description="Assigned by comparison with orthologs" evidence="5">
    <location>
        <position position="5"/>
    </location>
</feature>
<feature type="unsure residue" description="Assigned by comparison with orthologs" evidence="5">
    <location>
        <position position="6"/>
    </location>
</feature>
<feature type="unsure residue" description="Assigned by comparison with orthologs" evidence="5">
    <location>
        <position position="8"/>
    </location>
</feature>
<feature type="unsure residue" description="Assigned by comparison with orthologs" evidence="5">
    <location>
        <position position="12"/>
    </location>
</feature>
<feature type="unsure residue" description="Assigned by comparison with orthologs" evidence="5">
    <location>
        <position position="15"/>
    </location>
</feature>
<feature type="unsure residue" description="Assigned by comparison with orthologs" evidence="5">
    <location>
        <position position="16"/>
    </location>
</feature>
<keyword id="KW-0878">Amphibian defense peptide</keyword>
<keyword id="KW-0044">Antibiotic</keyword>
<keyword id="KW-0929">Antimicrobial</keyword>
<keyword id="KW-0903">Direct protein sequencing</keyword>
<keyword id="KW-1015">Disulfide bond</keyword>
<keyword id="KW-0391">Immunity</keyword>
<keyword id="KW-0399">Innate immunity</keyword>
<keyword id="KW-0964">Secreted</keyword>